<protein>
    <recommendedName>
        <fullName evidence="4">Anti-CBASS protein 2</fullName>
        <shortName evidence="4">Acb2</shortName>
    </recommendedName>
</protein>
<comment type="function">
    <text evidence="1 2">Antagonizes CBASS (cyclic oligonucleotide-based antiphage signaling system) (PubMed:36750095). Binds and sequesters host-produced 3',3'-cyclic GMP-AMP (cGAMP) (thus preventing host CapV activation) without degrading the cyclic nucleotide. Probably binds some other cyclic dinucleotides as well (By similarity).</text>
</comment>
<comment type="subunit">
    <text evidence="1">Homohexamer in apo and 3',3'-cGAMP-bound form.</text>
</comment>
<comment type="induction">
    <text evidence="6">Probably not expressed during lysogeny maintenance, is probably induced during lysogeny induction (PubMed:36750095).</text>
</comment>
<comment type="disruption phenotype">
    <text evidence="2">Phage becomes sensitive to CBASS type II-2 system; phage titer decreases over 10(5)-fold (PubMed:36750095).</text>
</comment>
<comment type="similarity">
    <text evidence="5">Belongs to the Acb2 family.</text>
</comment>
<sequence length="108" mass="11737">MDNQHRKIAGYRELTQDDIDLMNRVKAVGAELLALQAALAGRLSTDLEVKQAAAKASKLAPEHESSPECVELRRFLAAEPLRWAAIAKTDIQTGVMALVRAIAQPEGC</sequence>
<gene>
    <name evidence="4" type="primary">acb2</name>
    <name type="ORF">FDJ60_gp34</name>
    <name evidence="3" type="ORF">HMPREFV_HMPID9886gp0038</name>
</gene>
<organism>
    <name type="scientific">Pseudomonas phage JBD67</name>
    <dbReference type="NCBI Taxonomy" id="1225793"/>
    <lineage>
        <taxon>Viruses</taxon>
        <taxon>Duplodnaviria</taxon>
        <taxon>Heunggongvirae</taxon>
        <taxon>Uroviricota</taxon>
        <taxon>Caudoviricetes</taxon>
        <taxon>Beetrevirus</taxon>
        <taxon>Beetrevirus JBD67</taxon>
    </lineage>
</organism>
<reference key="1">
    <citation type="journal article" date="2012" name="J. Bacteriol.">
        <title>The CRISPR/Cas adaptive immune system of Pseudomonas aeruginosa mediates resistance to naturally occurring and engineered phages.</title>
        <authorList>
            <person name="Cady K.C."/>
            <person name="Bondy-Denomy J."/>
            <person name="Heussler G.E."/>
            <person name="Davidson A.R."/>
            <person name="O'Toole G.A."/>
        </authorList>
    </citation>
    <scope>NUCLEOTIDE SEQUENCE [LARGE SCALE GENOMIC DNA]</scope>
    <source>
        <strain>JBD67</strain>
    </source>
</reference>
<reference key="2">
    <citation type="journal article" date="2023" name="Cell">
        <title>Bacteriophages inhibit and evade cGAS-like immune function in bacteria.</title>
        <authorList>
            <person name="Huiting E."/>
            <person name="Cao X."/>
            <person name="Ren J."/>
            <person name="Athukoralage J.S."/>
            <person name="Luo Z."/>
            <person name="Silas S."/>
            <person name="An N."/>
            <person name="Carion H."/>
            <person name="Zhou Y."/>
            <person name="Fraser J.S."/>
            <person name="Feng Y."/>
            <person name="Bondy-Denomy J."/>
        </authorList>
    </citation>
    <scope>FUNCTION</scope>
    <scope>INDUCTION</scope>
    <scope>DISRUPTION PHENOTYPE</scope>
    <source>
        <strain>JBD67</strain>
    </source>
</reference>
<name>ACB2_BPPPJ</name>
<accession>P0DX89</accession>
<accession>J9SUQ8</accession>
<feature type="chain" id="PRO_0000459554" description="Anti-CBASS protein 2">
    <location>
        <begin position="1"/>
        <end position="108"/>
    </location>
</feature>
<feature type="binding site" evidence="1">
    <location>
        <position position="4"/>
    </location>
    <ligand>
        <name>3',3'-cGAMP</name>
        <dbReference type="ChEBI" id="CHEBI:71501"/>
    </ligand>
</feature>
<feature type="binding site" evidence="1">
    <location>
        <position position="11"/>
    </location>
    <ligand>
        <name>3',3'-cGAMP</name>
        <dbReference type="ChEBI" id="CHEBI:71501"/>
    </ligand>
</feature>
<feature type="binding site" evidence="1">
    <location>
        <position position="26"/>
    </location>
    <ligand>
        <name>3',3'-cGAMP</name>
        <dbReference type="ChEBI" id="CHEBI:71501"/>
    </ligand>
</feature>
<dbReference type="EMBL" id="JX495043">
    <property type="protein sequence ID" value="AFR52294.1"/>
    <property type="molecule type" value="Genomic_DNA"/>
</dbReference>
<dbReference type="SMR" id="P0DX89"/>
<dbReference type="OrthoDB" id="25278at10239"/>
<dbReference type="Proteomes" id="UP000259509">
    <property type="component" value="Genome"/>
</dbReference>
<dbReference type="GO" id="GO:0000166">
    <property type="term" value="F:nucleotide binding"/>
    <property type="evidence" value="ECO:0007669"/>
    <property type="project" value="UniProtKB-KW"/>
</dbReference>
<dbReference type="InterPro" id="IPR056098">
    <property type="entry name" value="Acb2/Tad1_hairpin"/>
</dbReference>
<dbReference type="Pfam" id="PF24729">
    <property type="entry name" value="Acb2_Tad1_hairpin"/>
    <property type="match status" value="1"/>
</dbReference>
<keyword id="KW-0547">Nucleotide-binding</keyword>
<evidence type="ECO:0000250" key="1">
    <source>
        <dbReference type="UniProtKB" id="A0A1C8HPQ3"/>
    </source>
</evidence>
<evidence type="ECO:0000269" key="2">
    <source>
    </source>
</evidence>
<evidence type="ECO:0000303" key="3">
    <source>
    </source>
</evidence>
<evidence type="ECO:0000303" key="4">
    <source>
    </source>
</evidence>
<evidence type="ECO:0000305" key="5"/>
<evidence type="ECO:0000305" key="6">
    <source>
    </source>
</evidence>
<proteinExistence type="evidence at transcript level"/>